<dbReference type="SMR" id="P84094"/>
<dbReference type="GO" id="GO:0005576">
    <property type="term" value="C:extracellular region"/>
    <property type="evidence" value="ECO:0007669"/>
    <property type="project" value="UniProtKB-SubCell"/>
</dbReference>
<dbReference type="GO" id="GO:0008200">
    <property type="term" value="F:ion channel inhibitor activity"/>
    <property type="evidence" value="ECO:0007669"/>
    <property type="project" value="InterPro"/>
</dbReference>
<dbReference type="GO" id="GO:0015459">
    <property type="term" value="F:potassium channel regulator activity"/>
    <property type="evidence" value="ECO:0007669"/>
    <property type="project" value="UniProtKB-KW"/>
</dbReference>
<dbReference type="GO" id="GO:0090729">
    <property type="term" value="F:toxin activity"/>
    <property type="evidence" value="ECO:0007669"/>
    <property type="project" value="UniProtKB-KW"/>
</dbReference>
<dbReference type="Gene3D" id="3.30.30.10">
    <property type="entry name" value="Knottin, scorpion toxin-like"/>
    <property type="match status" value="1"/>
</dbReference>
<dbReference type="InterPro" id="IPR036574">
    <property type="entry name" value="Scorpion_toxin-like_sf"/>
</dbReference>
<dbReference type="InterPro" id="IPR001947">
    <property type="entry name" value="Scorpion_toxinS_K_inh"/>
</dbReference>
<dbReference type="Pfam" id="PF00451">
    <property type="entry name" value="Toxin_2"/>
    <property type="match status" value="1"/>
</dbReference>
<dbReference type="SUPFAM" id="SSF57095">
    <property type="entry name" value="Scorpion toxin-like"/>
    <property type="match status" value="1"/>
</dbReference>
<dbReference type="PROSITE" id="PS01138">
    <property type="entry name" value="SCORP_SHORT_TOXIN"/>
    <property type="match status" value="1"/>
</dbReference>
<proteinExistence type="evidence at protein level"/>
<protein>
    <recommendedName>
        <fullName>Potassium channel toxin alpha-KTx 6.13</fullName>
    </recommendedName>
    <alternativeName>
        <fullName evidence="7 8">Spinoxin</fullName>
    </alternativeName>
</protein>
<organism>
    <name type="scientific">Heterometrus spinifer</name>
    <name type="common">Asia giant forest scorpion</name>
    <name type="synonym">Malaysian black scorpion</name>
    <dbReference type="NCBI Taxonomy" id="118530"/>
    <lineage>
        <taxon>Eukaryota</taxon>
        <taxon>Metazoa</taxon>
        <taxon>Ecdysozoa</taxon>
        <taxon>Arthropoda</taxon>
        <taxon>Chelicerata</taxon>
        <taxon>Arachnida</taxon>
        <taxon>Scorpiones</taxon>
        <taxon>Iurida</taxon>
        <taxon>Scorpionoidea</taxon>
        <taxon>Scorpionidae</taxon>
        <taxon>Heterometrinae</taxon>
        <taxon>Heterometrus</taxon>
    </lineage>
</organism>
<feature type="chain" id="PRO_0000248273" description="Potassium channel toxin alpha-KTx 6.13" evidence="4">
    <location>
        <begin position="1"/>
        <end position="34"/>
    </location>
</feature>
<feature type="site" description="Basic residue of the functional dyad" evidence="1">
    <location>
        <position position="23"/>
    </location>
</feature>
<feature type="site" description="Aromatic residue of the functional dyad" evidence="1">
    <location>
        <position position="32"/>
    </location>
</feature>
<feature type="modified residue" description="Cysteine amide" evidence="4">
    <location>
        <position position="34"/>
    </location>
</feature>
<feature type="disulfide bond" evidence="6">
    <location>
        <begin position="3"/>
        <end position="24"/>
    </location>
</feature>
<feature type="disulfide bond" evidence="6">
    <location>
        <begin position="9"/>
        <end position="29"/>
    </location>
</feature>
<feature type="disulfide bond" evidence="6">
    <location>
        <begin position="13"/>
        <end position="31"/>
    </location>
</feature>
<feature type="disulfide bond" evidence="6">
    <location>
        <begin position="19"/>
        <end position="34"/>
    </location>
</feature>
<evidence type="ECO:0000250" key="1">
    <source>
        <dbReference type="UniProtKB" id="Q10726"/>
    </source>
</evidence>
<evidence type="ECO:0000269" key="2">
    <source>
    </source>
</evidence>
<evidence type="ECO:0000269" key="3">
    <source>
    </source>
</evidence>
<evidence type="ECO:0000269" key="4">
    <source ref="1"/>
</evidence>
<evidence type="ECO:0000269" key="5">
    <source ref="2"/>
</evidence>
<evidence type="ECO:0000269" key="6">
    <source ref="4"/>
</evidence>
<evidence type="ECO:0000303" key="7">
    <source ref="1"/>
</evidence>
<evidence type="ECO:0000303" key="8">
    <source ref="2"/>
</evidence>
<evidence type="ECO:0000305" key="9"/>
<keyword id="KW-0027">Amidation</keyword>
<keyword id="KW-0903">Direct protein sequencing</keyword>
<keyword id="KW-1015">Disulfide bond</keyword>
<keyword id="KW-0872">Ion channel impairing toxin</keyword>
<keyword id="KW-0528">Neurotoxin</keyword>
<keyword id="KW-0632">Potassium channel impairing toxin</keyword>
<keyword id="KW-0964">Secreted</keyword>
<keyword id="KW-0800">Toxin</keyword>
<keyword id="KW-1220">Voltage-gated potassium channel impairing toxin</keyword>
<accession>P84094</accession>
<comment type="function">
    <text evidence="3 4 5">Antagonist of Kv1/KCNA potassium channels (Ref.1, Ref.2). Shows a weak interaction with muscle-type nicotinic acetylcholine receptors (nAChR), since it inhibits alpha-bungarotoxin binding to both muscle-type nAChR from T.californica (IC(50)=490 nM) (PubMed:31276191). This suggests it probably weakly inhibits nAChR (PubMed:31276191).</text>
</comment>
<comment type="subcellular location">
    <subcellularLocation>
        <location evidence="4">Secreted</location>
    </subcellularLocation>
</comment>
<comment type="tissue specificity">
    <text evidence="9">Expressed by the venom gland.</text>
</comment>
<comment type="domain">
    <text>Has the structural arrangement of an alpha-helix connected to a beta-sheet by disulfide bonds (CSalpha/beta).</text>
</comment>
<comment type="miscellaneous">
    <text evidence="2 3">Negative results: does not inhibit ERG1/Kv11.1/KCNH2 potassium channels (PubMed:18687312). May not inhibit neuronal human alpha-7 nAChR, since it does not inhibit alpha-7 alpha-bungarotoxin binding (IC(50)&gt;&gt;20 uM) (PubMed:31276191).</text>
</comment>
<comment type="similarity">
    <text evidence="9">Belongs to the short scorpion toxin superfamily. Potassium channel inhibitor family. Alpha-KTx 06 subfamily.</text>
</comment>
<name>KAX6D_HETSP</name>
<sequence>IRCSGSRDCYSPCMKQTGCPNAKCINKSCKCYGC</sequence>
<reference key="1">
    <citation type="submission" date="2004-07" db="UniProtKB">
        <authorList>
            <person name="Nirthanan S."/>
            <person name="Huys I."/>
            <person name="Sugahara Y."/>
            <person name="Gopalakrishnakone P."/>
            <person name="Sato K."/>
            <person name="Tytgat J."/>
        </authorList>
    </citation>
    <scope>PROTEIN SEQUENCE</scope>
    <scope>FUNCTION</scope>
    <scope>SUBCELLULAR LOCATION</scope>
    <scope>AMIDATION AT CYS-34</scope>
    <source>
        <tissue>Venom</tissue>
    </source>
</reference>
<reference key="2">
    <citation type="book" date="2004" name="Peptide science 2003 - The Proceedings of the 40th Symposium on Japanese peptide symposium">
        <title>Synthesis and characterization of spinoxin, a novel peptide toxin from the Malaysian black scorpion.</title>
        <editorList>
            <person name="Ueki M."/>
        </editorList>
        <authorList>
            <person name="Sugahara Y."/>
            <person name="Nirthanan S."/>
            <person name="Huys I."/>
            <person name="Kobayashi K."/>
            <person name="Kohno T."/>
            <person name="Tytgat J."/>
            <person name="Gopalakrishnakone P."/>
            <person name="Sato K."/>
        </authorList>
    </citation>
    <scope>SYNTHESIS</scope>
    <scope>FUNCTION</scope>
</reference>
<reference key="3">
    <citation type="journal article" date="2008" name="Biochem. Pharmacol.">
        <title>A common 'hot spot' confers hERG blockade activity to alpha-scorpion toxins affecting K+ channels.</title>
        <authorList>
            <person name="Abdel-Mottaleb Y."/>
            <person name="Corzo G."/>
            <person name="Martin-Eauclaire M.F."/>
            <person name="Satake H."/>
            <person name="Ceard B."/>
            <person name="Peigneur S."/>
            <person name="Nambaru P."/>
            <person name="Bougis P.E."/>
            <person name="Possani L.D."/>
            <person name="Tytgat J."/>
        </authorList>
    </citation>
    <scope>PHARMACOLOGICAL CHARACTERIZATION</scope>
</reference>
<reference key="4">
    <citation type="submission" date="2016-05" db="UniProtKB">
        <title>Delineating a potassium channel blocking mini-peptide from spinoxin (alphaKTx6.13), a new Kv1 channel toxin from Heterometrus spinifer scorpion venom.</title>
        <authorList>
            <person name="Nirthanan S."/>
            <person name="Yamaguchi Y."/>
            <person name="Sugahara Y."/>
            <person name="Peigneur S."/>
            <person name="Nose T."/>
            <person name="Kobayashi K."/>
            <person name="Kohno T."/>
            <person name="Gopalakrishnakone P."/>
            <person name="Sato K."/>
            <person name="Tytgat J."/>
        </authorList>
    </citation>
    <scope>IDENTIFICATION BY MASS SPECTROMETRY</scope>
    <scope>DISULFIDE BONDS</scope>
</reference>
<reference key="5">
    <citation type="journal article" date="2019" name="FEBS Lett.">
        <title>Scorpion toxins interact with nicotinic acetylcholine receptors.</title>
        <authorList>
            <person name="Kasheverov I.E."/>
            <person name="Oparin P.B."/>
            <person name="Zhmak M.N."/>
            <person name="Egorova N.S."/>
            <person name="Ivanov I.A."/>
            <person name="Gigolaev A.M."/>
            <person name="Nekrasova O.V."/>
            <person name="Serebryakova M.V."/>
            <person name="Kudryavtsev D.S."/>
            <person name="Prokopev N.A."/>
            <person name="Hoang A.N."/>
            <person name="Tsetlin V.I."/>
            <person name="Vassilevski A.A."/>
            <person name="Utkin Y.N."/>
        </authorList>
    </citation>
    <scope>FUNCTION</scope>
    <scope>SYNTHESIS</scope>
</reference>